<organism>
    <name type="scientific">Salmonella typhimurium (strain LT2 / SGSC1412 / ATCC 700720)</name>
    <dbReference type="NCBI Taxonomy" id="99287"/>
    <lineage>
        <taxon>Bacteria</taxon>
        <taxon>Pseudomonadati</taxon>
        <taxon>Pseudomonadota</taxon>
        <taxon>Gammaproteobacteria</taxon>
        <taxon>Enterobacterales</taxon>
        <taxon>Enterobacteriaceae</taxon>
        <taxon>Salmonella</taxon>
    </lineage>
</organism>
<dbReference type="EMBL" id="AE006468">
    <property type="protein sequence ID" value="AAL22516.1"/>
    <property type="molecule type" value="Genomic_DNA"/>
</dbReference>
<dbReference type="RefSeq" id="NP_462557.1">
    <property type="nucleotide sequence ID" value="NC_003197.2"/>
</dbReference>
<dbReference type="RefSeq" id="WP_000605590.1">
    <property type="nucleotide sequence ID" value="NC_003197.2"/>
</dbReference>
<dbReference type="STRING" id="99287.STM3657"/>
<dbReference type="PaxDb" id="99287-STM3657"/>
<dbReference type="GeneID" id="1255181"/>
<dbReference type="KEGG" id="stm:STM3657"/>
<dbReference type="PATRIC" id="fig|99287.12.peg.3868"/>
<dbReference type="HOGENOM" id="CLU_162515_0_0_6"/>
<dbReference type="OMA" id="FICSFDP"/>
<dbReference type="PhylomeDB" id="Q8ZL94"/>
<dbReference type="BioCyc" id="SENT99287:STM3657-MONOMER"/>
<dbReference type="Proteomes" id="UP000001014">
    <property type="component" value="Chromosome"/>
</dbReference>
<dbReference type="GO" id="GO:0005886">
    <property type="term" value="C:plasma membrane"/>
    <property type="evidence" value="ECO:0007669"/>
    <property type="project" value="UniProtKB-SubCell"/>
</dbReference>
<dbReference type="InterPro" id="IPR025728">
    <property type="entry name" value="YsaB-like"/>
</dbReference>
<dbReference type="Pfam" id="PF13983">
    <property type="entry name" value="YsaB"/>
    <property type="match status" value="1"/>
</dbReference>
<dbReference type="PROSITE" id="PS51257">
    <property type="entry name" value="PROKAR_LIPOPROTEIN"/>
    <property type="match status" value="1"/>
</dbReference>
<keyword id="KW-1003">Cell membrane</keyword>
<keyword id="KW-0449">Lipoprotein</keyword>
<keyword id="KW-0472">Membrane</keyword>
<keyword id="KW-0564">Palmitate</keyword>
<keyword id="KW-1185">Reference proteome</keyword>
<keyword id="KW-0732">Signal</keyword>
<evidence type="ECO:0000255" key="1">
    <source>
        <dbReference type="PROSITE-ProRule" id="PRU00303"/>
    </source>
</evidence>
<name>YSAB_SALTY</name>
<gene>
    <name type="primary">ysaB</name>
    <name type="ordered locus">STM3657</name>
</gene>
<feature type="signal peptide" evidence="1">
    <location>
        <begin position="1"/>
        <end position="17"/>
    </location>
</feature>
<feature type="chain" id="PRO_0000268616" description="Uncharacterized lipoprotein YsaB">
    <location>
        <begin position="18"/>
        <end position="100"/>
    </location>
</feature>
<feature type="lipid moiety-binding region" description="N-palmitoyl cysteine" evidence="1">
    <location>
        <position position="18"/>
    </location>
</feature>
<feature type="lipid moiety-binding region" description="S-diacylglycerol cysteine" evidence="1">
    <location>
        <position position="18"/>
    </location>
</feature>
<comment type="subcellular location">
    <subcellularLocation>
        <location evidence="1">Cell membrane</location>
        <topology evidence="1">Lipid-anchor</topology>
    </subcellularLocation>
</comment>
<protein>
    <recommendedName>
        <fullName>Uncharacterized lipoprotein YsaB</fullName>
    </recommendedName>
</protein>
<sequence>MIMKYFCSVMIAIALVGCTATPPPTQKAQQSKVSPTRTLDMEALCKAQAAQRYNTGAQKIAVTGFEQFQGSYEMRGNTFRKESFVCSFDADGQFLHLSMR</sequence>
<accession>Q8ZL94</accession>
<reference key="1">
    <citation type="journal article" date="2001" name="Nature">
        <title>Complete genome sequence of Salmonella enterica serovar Typhimurium LT2.</title>
        <authorList>
            <person name="McClelland M."/>
            <person name="Sanderson K.E."/>
            <person name="Spieth J."/>
            <person name="Clifton S.W."/>
            <person name="Latreille P."/>
            <person name="Courtney L."/>
            <person name="Porwollik S."/>
            <person name="Ali J."/>
            <person name="Dante M."/>
            <person name="Du F."/>
            <person name="Hou S."/>
            <person name="Layman D."/>
            <person name="Leonard S."/>
            <person name="Nguyen C."/>
            <person name="Scott K."/>
            <person name="Holmes A."/>
            <person name="Grewal N."/>
            <person name="Mulvaney E."/>
            <person name="Ryan E."/>
            <person name="Sun H."/>
            <person name="Florea L."/>
            <person name="Miller W."/>
            <person name="Stoneking T."/>
            <person name="Nhan M."/>
            <person name="Waterston R."/>
            <person name="Wilson R.K."/>
        </authorList>
    </citation>
    <scope>NUCLEOTIDE SEQUENCE [LARGE SCALE GENOMIC DNA]</scope>
    <source>
        <strain>LT2 / SGSC1412 / ATCC 700720</strain>
    </source>
</reference>
<proteinExistence type="inferred from homology"/>